<keyword id="KW-0004">4Fe-4S</keyword>
<keyword id="KW-0408">Iron</keyword>
<keyword id="KW-0411">Iron-sulfur</keyword>
<keyword id="KW-0414">Isoprene biosynthesis</keyword>
<keyword id="KW-0479">Metal-binding</keyword>
<keyword id="KW-0560">Oxidoreductase</keyword>
<keyword id="KW-1185">Reference proteome</keyword>
<proteinExistence type="inferred from homology"/>
<feature type="chain" id="PRO_0000128836" description="4-hydroxy-3-methylbut-2-enyl diphosphate reductase 1">
    <location>
        <begin position="1"/>
        <end position="335"/>
    </location>
</feature>
<feature type="active site" description="Proton donor" evidence="1">
    <location>
        <position position="151"/>
    </location>
</feature>
<feature type="binding site" evidence="1">
    <location>
        <position position="37"/>
    </location>
    <ligand>
        <name>[4Fe-4S] cluster</name>
        <dbReference type="ChEBI" id="CHEBI:49883"/>
    </ligand>
</feature>
<feature type="binding site" evidence="1">
    <location>
        <position position="66"/>
    </location>
    <ligand>
        <name>(2E)-4-hydroxy-3-methylbut-2-enyl diphosphate</name>
        <dbReference type="ChEBI" id="CHEBI:128753"/>
    </ligand>
</feature>
<feature type="binding site" evidence="1">
    <location>
        <position position="66"/>
    </location>
    <ligand>
        <name>dimethylallyl diphosphate</name>
        <dbReference type="ChEBI" id="CHEBI:57623"/>
    </ligand>
</feature>
<feature type="binding site" evidence="1">
    <location>
        <position position="66"/>
    </location>
    <ligand>
        <name>isopentenyl diphosphate</name>
        <dbReference type="ChEBI" id="CHEBI:128769"/>
    </ligand>
</feature>
<feature type="binding site" evidence="1">
    <location>
        <position position="99"/>
    </location>
    <ligand>
        <name>(2E)-4-hydroxy-3-methylbut-2-enyl diphosphate</name>
        <dbReference type="ChEBI" id="CHEBI:128753"/>
    </ligand>
</feature>
<feature type="binding site" evidence="1">
    <location>
        <position position="99"/>
    </location>
    <ligand>
        <name>dimethylallyl diphosphate</name>
        <dbReference type="ChEBI" id="CHEBI:57623"/>
    </ligand>
</feature>
<feature type="binding site" evidence="1">
    <location>
        <position position="99"/>
    </location>
    <ligand>
        <name>isopentenyl diphosphate</name>
        <dbReference type="ChEBI" id="CHEBI:128769"/>
    </ligand>
</feature>
<feature type="binding site" evidence="1">
    <location>
        <position position="121"/>
    </location>
    <ligand>
        <name>[4Fe-4S] cluster</name>
        <dbReference type="ChEBI" id="CHEBI:49883"/>
    </ligand>
</feature>
<feature type="binding site" evidence="1">
    <location>
        <position position="149"/>
    </location>
    <ligand>
        <name>(2E)-4-hydroxy-3-methylbut-2-enyl diphosphate</name>
        <dbReference type="ChEBI" id="CHEBI:128753"/>
    </ligand>
</feature>
<feature type="binding site" evidence="1">
    <location>
        <position position="149"/>
    </location>
    <ligand>
        <name>dimethylallyl diphosphate</name>
        <dbReference type="ChEBI" id="CHEBI:57623"/>
    </ligand>
</feature>
<feature type="binding site" evidence="1">
    <location>
        <position position="149"/>
    </location>
    <ligand>
        <name>isopentenyl diphosphate</name>
        <dbReference type="ChEBI" id="CHEBI:128769"/>
    </ligand>
</feature>
<feature type="binding site" evidence="1">
    <location>
        <position position="189"/>
    </location>
    <ligand>
        <name>(2E)-4-hydroxy-3-methylbut-2-enyl diphosphate</name>
        <dbReference type="ChEBI" id="CHEBI:128753"/>
    </ligand>
</feature>
<feature type="binding site" evidence="1">
    <location>
        <position position="219"/>
    </location>
    <ligand>
        <name>[4Fe-4S] cluster</name>
        <dbReference type="ChEBI" id="CHEBI:49883"/>
    </ligand>
</feature>
<feature type="binding site" evidence="1">
    <location>
        <position position="247"/>
    </location>
    <ligand>
        <name>(2E)-4-hydroxy-3-methylbut-2-enyl diphosphate</name>
        <dbReference type="ChEBI" id="CHEBI:128753"/>
    </ligand>
</feature>
<feature type="binding site" evidence="1">
    <location>
        <position position="247"/>
    </location>
    <ligand>
        <name>dimethylallyl diphosphate</name>
        <dbReference type="ChEBI" id="CHEBI:57623"/>
    </ligand>
</feature>
<feature type="binding site" evidence="1">
    <location>
        <position position="247"/>
    </location>
    <ligand>
        <name>isopentenyl diphosphate</name>
        <dbReference type="ChEBI" id="CHEBI:128769"/>
    </ligand>
</feature>
<feature type="binding site" evidence="1">
    <location>
        <position position="248"/>
    </location>
    <ligand>
        <name>(2E)-4-hydroxy-3-methylbut-2-enyl diphosphate</name>
        <dbReference type="ChEBI" id="CHEBI:128753"/>
    </ligand>
</feature>
<feature type="binding site" evidence="1">
    <location>
        <position position="248"/>
    </location>
    <ligand>
        <name>dimethylallyl diphosphate</name>
        <dbReference type="ChEBI" id="CHEBI:57623"/>
    </ligand>
</feature>
<feature type="binding site" evidence="1">
    <location>
        <position position="248"/>
    </location>
    <ligand>
        <name>isopentenyl diphosphate</name>
        <dbReference type="ChEBI" id="CHEBI:128769"/>
    </ligand>
</feature>
<feature type="binding site" evidence="1">
    <location>
        <position position="249"/>
    </location>
    <ligand>
        <name>(2E)-4-hydroxy-3-methylbut-2-enyl diphosphate</name>
        <dbReference type="ChEBI" id="CHEBI:128753"/>
    </ligand>
</feature>
<feature type="binding site" evidence="1">
    <location>
        <position position="249"/>
    </location>
    <ligand>
        <name>dimethylallyl diphosphate</name>
        <dbReference type="ChEBI" id="CHEBI:57623"/>
    </ligand>
</feature>
<feature type="binding site" evidence="1">
    <location>
        <position position="249"/>
    </location>
    <ligand>
        <name>isopentenyl diphosphate</name>
        <dbReference type="ChEBI" id="CHEBI:128769"/>
    </ligand>
</feature>
<feature type="binding site" evidence="1">
    <location>
        <position position="292"/>
    </location>
    <ligand>
        <name>(2E)-4-hydroxy-3-methylbut-2-enyl diphosphate</name>
        <dbReference type="ChEBI" id="CHEBI:128753"/>
    </ligand>
</feature>
<feature type="binding site" evidence="1">
    <location>
        <position position="292"/>
    </location>
    <ligand>
        <name>dimethylallyl diphosphate</name>
        <dbReference type="ChEBI" id="CHEBI:57623"/>
    </ligand>
</feature>
<feature type="binding site" evidence="1">
    <location>
        <position position="292"/>
    </location>
    <ligand>
        <name>isopentenyl diphosphate</name>
        <dbReference type="ChEBI" id="CHEBI:128769"/>
    </ligand>
</feature>
<evidence type="ECO:0000255" key="1">
    <source>
        <dbReference type="HAMAP-Rule" id="MF_00191"/>
    </source>
</evidence>
<accession>P0A5I1</accession>
<accession>A0A1R3XXD4</accession>
<accession>O53458</accession>
<accession>X2BH45</accession>
<sequence>MVPTVDMGIPGASVSSRSVADRPNRKRVLLAEPRGYCAGVDRAVETVERALQKHGPPVYVRHEIVHNRHVVDTLAKAGAVFVEETEQVPEGAIVVFSAHGVAPTVHVSASERNLQVIDATCPLVTKVHNEARRFARDDYDILLIGHEGHEEVVGTAGEAPDHVQLVDGVDAVDQVTVRDEDKVVWLSQTTLSVDETMEIVGRLRRRFPKLQDPPSDDICYATQNRQVAVKAMAPECELVIVVGSRNSSNSVRLVEVALGAGARAAHLVDWADDIDSAWLDGVTTVGVTSGASVPEVLVRGVLERLAECGYDIVQPVTTANETLVFALPRELRSPR</sequence>
<dbReference type="EC" id="1.17.7.4" evidence="1"/>
<dbReference type="EMBL" id="LT708304">
    <property type="protein sequence ID" value="SIT99740.1"/>
    <property type="molecule type" value="Genomic_DNA"/>
</dbReference>
<dbReference type="RefSeq" id="NP_854796.1">
    <property type="nucleotide sequence ID" value="NC_002945.3"/>
</dbReference>
<dbReference type="RefSeq" id="WP_003405853.1">
    <property type="nucleotide sequence ID" value="NC_002945.4"/>
</dbReference>
<dbReference type="SMR" id="P0A5I1"/>
<dbReference type="KEGG" id="mbo:BQ2027_MB1140"/>
<dbReference type="PATRIC" id="fig|233413.5.peg.1247"/>
<dbReference type="UniPathway" id="UPA00056">
    <property type="reaction ID" value="UER00097"/>
</dbReference>
<dbReference type="UniPathway" id="UPA00059">
    <property type="reaction ID" value="UER00105"/>
</dbReference>
<dbReference type="Proteomes" id="UP000001419">
    <property type="component" value="Chromosome"/>
</dbReference>
<dbReference type="GO" id="GO:0051539">
    <property type="term" value="F:4 iron, 4 sulfur cluster binding"/>
    <property type="evidence" value="ECO:0007669"/>
    <property type="project" value="UniProtKB-UniRule"/>
</dbReference>
<dbReference type="GO" id="GO:0051745">
    <property type="term" value="F:4-hydroxy-3-methylbut-2-enyl diphosphate reductase activity"/>
    <property type="evidence" value="ECO:0007669"/>
    <property type="project" value="UniProtKB-UniRule"/>
</dbReference>
<dbReference type="GO" id="GO:0046872">
    <property type="term" value="F:metal ion binding"/>
    <property type="evidence" value="ECO:0007669"/>
    <property type="project" value="UniProtKB-KW"/>
</dbReference>
<dbReference type="GO" id="GO:0050992">
    <property type="term" value="P:dimethylallyl diphosphate biosynthetic process"/>
    <property type="evidence" value="ECO:0007669"/>
    <property type="project" value="UniProtKB-UniRule"/>
</dbReference>
<dbReference type="GO" id="GO:0019288">
    <property type="term" value="P:isopentenyl diphosphate biosynthetic process, methylerythritol 4-phosphate pathway"/>
    <property type="evidence" value="ECO:0007669"/>
    <property type="project" value="UniProtKB-UniRule"/>
</dbReference>
<dbReference type="GO" id="GO:0016114">
    <property type="term" value="P:terpenoid biosynthetic process"/>
    <property type="evidence" value="ECO:0007669"/>
    <property type="project" value="UniProtKB-UniRule"/>
</dbReference>
<dbReference type="CDD" id="cd13944">
    <property type="entry name" value="lytB_ispH"/>
    <property type="match status" value="1"/>
</dbReference>
<dbReference type="Gene3D" id="3.40.50.11270">
    <property type="match status" value="1"/>
</dbReference>
<dbReference type="Gene3D" id="3.40.1010.20">
    <property type="entry name" value="4-hydroxy-3-methylbut-2-enyl diphosphate reductase, catalytic domain"/>
    <property type="match status" value="2"/>
</dbReference>
<dbReference type="HAMAP" id="MF_00191">
    <property type="entry name" value="IspH"/>
    <property type="match status" value="1"/>
</dbReference>
<dbReference type="InterPro" id="IPR003451">
    <property type="entry name" value="LytB/IspH"/>
</dbReference>
<dbReference type="NCBIfam" id="TIGR00216">
    <property type="entry name" value="ispH_lytB"/>
    <property type="match status" value="1"/>
</dbReference>
<dbReference type="NCBIfam" id="NF002188">
    <property type="entry name" value="PRK01045.1-2"/>
    <property type="match status" value="1"/>
</dbReference>
<dbReference type="NCBIfam" id="NF002189">
    <property type="entry name" value="PRK01045.1-3"/>
    <property type="match status" value="1"/>
</dbReference>
<dbReference type="NCBIfam" id="NF002190">
    <property type="entry name" value="PRK01045.1-4"/>
    <property type="match status" value="1"/>
</dbReference>
<dbReference type="PANTHER" id="PTHR30426">
    <property type="entry name" value="4-HYDROXY-3-METHYLBUT-2-ENYL DIPHOSPHATE REDUCTASE"/>
    <property type="match status" value="1"/>
</dbReference>
<dbReference type="PANTHER" id="PTHR30426:SF0">
    <property type="entry name" value="4-HYDROXY-3-METHYLBUT-2-ENYL DIPHOSPHATE REDUCTASE"/>
    <property type="match status" value="1"/>
</dbReference>
<dbReference type="Pfam" id="PF02401">
    <property type="entry name" value="LYTB"/>
    <property type="match status" value="1"/>
</dbReference>
<protein>
    <recommendedName>
        <fullName evidence="1">4-hydroxy-3-methylbut-2-enyl diphosphate reductase 1</fullName>
        <shortName evidence="1">HMBPP reductase 1</shortName>
        <ecNumber evidence="1">1.17.7.4</ecNumber>
    </recommendedName>
</protein>
<comment type="function">
    <text evidence="1">Catalyzes the conversion of 1-hydroxy-2-methyl-2-(E)-butenyl 4-diphosphate (HMBPP) into a mixture of isopentenyl diphosphate (IPP) and dimethylallyl diphosphate (DMAPP). Acts in the terminal step of the DOXP/MEP pathway for isoprenoid precursor biosynthesis.</text>
</comment>
<comment type="catalytic activity">
    <reaction evidence="1">
        <text>isopentenyl diphosphate + 2 oxidized [2Fe-2S]-[ferredoxin] + H2O = (2E)-4-hydroxy-3-methylbut-2-enyl diphosphate + 2 reduced [2Fe-2S]-[ferredoxin] + 2 H(+)</text>
        <dbReference type="Rhea" id="RHEA:24488"/>
        <dbReference type="Rhea" id="RHEA-COMP:10000"/>
        <dbReference type="Rhea" id="RHEA-COMP:10001"/>
        <dbReference type="ChEBI" id="CHEBI:15377"/>
        <dbReference type="ChEBI" id="CHEBI:15378"/>
        <dbReference type="ChEBI" id="CHEBI:33737"/>
        <dbReference type="ChEBI" id="CHEBI:33738"/>
        <dbReference type="ChEBI" id="CHEBI:128753"/>
        <dbReference type="ChEBI" id="CHEBI:128769"/>
        <dbReference type="EC" id="1.17.7.4"/>
    </reaction>
</comment>
<comment type="catalytic activity">
    <reaction evidence="1">
        <text>dimethylallyl diphosphate + 2 oxidized [2Fe-2S]-[ferredoxin] + H2O = (2E)-4-hydroxy-3-methylbut-2-enyl diphosphate + 2 reduced [2Fe-2S]-[ferredoxin] + 2 H(+)</text>
        <dbReference type="Rhea" id="RHEA:24825"/>
        <dbReference type="Rhea" id="RHEA-COMP:10000"/>
        <dbReference type="Rhea" id="RHEA-COMP:10001"/>
        <dbReference type="ChEBI" id="CHEBI:15377"/>
        <dbReference type="ChEBI" id="CHEBI:15378"/>
        <dbReference type="ChEBI" id="CHEBI:33737"/>
        <dbReference type="ChEBI" id="CHEBI:33738"/>
        <dbReference type="ChEBI" id="CHEBI:57623"/>
        <dbReference type="ChEBI" id="CHEBI:128753"/>
        <dbReference type="EC" id="1.17.7.4"/>
    </reaction>
</comment>
<comment type="cofactor">
    <cofactor evidence="1">
        <name>[4Fe-4S] cluster</name>
        <dbReference type="ChEBI" id="CHEBI:49883"/>
    </cofactor>
    <text evidence="1">Binds 1 [4Fe-4S] cluster per subunit.</text>
</comment>
<comment type="pathway">
    <text evidence="1">Isoprenoid biosynthesis; dimethylallyl diphosphate biosynthesis; dimethylallyl diphosphate from (2E)-4-hydroxy-3-methylbutenyl diphosphate: step 1/1.</text>
</comment>
<comment type="pathway">
    <text evidence="1">Isoprenoid biosynthesis; isopentenyl diphosphate biosynthesis via DXP pathway; isopentenyl diphosphate from 1-deoxy-D-xylulose 5-phosphate: step 6/6.</text>
</comment>
<comment type="similarity">
    <text evidence="1">Belongs to the IspH family.</text>
</comment>
<gene>
    <name evidence="1" type="primary">ispH1</name>
    <name type="synonym">lytB1</name>
    <name type="ordered locus">BQ2027_MB1140</name>
</gene>
<name>ISPH1_MYCBO</name>
<organism>
    <name type="scientific">Mycobacterium bovis (strain ATCC BAA-935 / AF2122/97)</name>
    <dbReference type="NCBI Taxonomy" id="233413"/>
    <lineage>
        <taxon>Bacteria</taxon>
        <taxon>Bacillati</taxon>
        <taxon>Actinomycetota</taxon>
        <taxon>Actinomycetes</taxon>
        <taxon>Mycobacteriales</taxon>
        <taxon>Mycobacteriaceae</taxon>
        <taxon>Mycobacterium</taxon>
        <taxon>Mycobacterium tuberculosis complex</taxon>
    </lineage>
</organism>
<reference key="1">
    <citation type="journal article" date="2003" name="Proc. Natl. Acad. Sci. U.S.A.">
        <title>The complete genome sequence of Mycobacterium bovis.</title>
        <authorList>
            <person name="Garnier T."/>
            <person name="Eiglmeier K."/>
            <person name="Camus J.-C."/>
            <person name="Medina N."/>
            <person name="Mansoor H."/>
            <person name="Pryor M."/>
            <person name="Duthoy S."/>
            <person name="Grondin S."/>
            <person name="Lacroix C."/>
            <person name="Monsempe C."/>
            <person name="Simon S."/>
            <person name="Harris B."/>
            <person name="Atkin R."/>
            <person name="Doggett J."/>
            <person name="Mayes R."/>
            <person name="Keating L."/>
            <person name="Wheeler P.R."/>
            <person name="Parkhill J."/>
            <person name="Barrell B.G."/>
            <person name="Cole S.T."/>
            <person name="Gordon S.V."/>
            <person name="Hewinson R.G."/>
        </authorList>
    </citation>
    <scope>NUCLEOTIDE SEQUENCE [LARGE SCALE GENOMIC DNA]</scope>
    <source>
        <strain>ATCC BAA-935 / AF2122/97</strain>
    </source>
</reference>
<reference key="2">
    <citation type="journal article" date="2017" name="Genome Announc.">
        <title>Updated reference genome sequence and annotation of Mycobacterium bovis AF2122/97.</title>
        <authorList>
            <person name="Malone K.M."/>
            <person name="Farrell D."/>
            <person name="Stuber T.P."/>
            <person name="Schubert O.T."/>
            <person name="Aebersold R."/>
            <person name="Robbe-Austerman S."/>
            <person name="Gordon S.V."/>
        </authorList>
    </citation>
    <scope>NUCLEOTIDE SEQUENCE [LARGE SCALE GENOMIC DNA]</scope>
    <scope>GENOME REANNOTATION</scope>
    <source>
        <strain>ATCC BAA-935 / AF2122/97</strain>
    </source>
</reference>